<dbReference type="EC" id="2.8.1.13" evidence="1"/>
<dbReference type="EMBL" id="CU633749">
    <property type="protein sequence ID" value="CAQ70533.1"/>
    <property type="molecule type" value="Genomic_DNA"/>
</dbReference>
<dbReference type="RefSeq" id="WP_012353829.1">
    <property type="nucleotide sequence ID" value="NC_010528.1"/>
</dbReference>
<dbReference type="SMR" id="B3R6Q0"/>
<dbReference type="GeneID" id="29762065"/>
<dbReference type="KEGG" id="cti:RALTA_A2602"/>
<dbReference type="eggNOG" id="COG0482">
    <property type="taxonomic scope" value="Bacteria"/>
</dbReference>
<dbReference type="HOGENOM" id="CLU_035188_1_0_4"/>
<dbReference type="BioCyc" id="CTAI977880:RALTA_RS12655-MONOMER"/>
<dbReference type="Proteomes" id="UP000001692">
    <property type="component" value="Chromosome 1"/>
</dbReference>
<dbReference type="GO" id="GO:0005737">
    <property type="term" value="C:cytoplasm"/>
    <property type="evidence" value="ECO:0007669"/>
    <property type="project" value="UniProtKB-SubCell"/>
</dbReference>
<dbReference type="GO" id="GO:0005524">
    <property type="term" value="F:ATP binding"/>
    <property type="evidence" value="ECO:0007669"/>
    <property type="project" value="UniProtKB-KW"/>
</dbReference>
<dbReference type="GO" id="GO:0000049">
    <property type="term" value="F:tRNA binding"/>
    <property type="evidence" value="ECO:0007669"/>
    <property type="project" value="UniProtKB-KW"/>
</dbReference>
<dbReference type="GO" id="GO:0103016">
    <property type="term" value="F:tRNA-uridine 2-sulfurtransferase activity"/>
    <property type="evidence" value="ECO:0007669"/>
    <property type="project" value="UniProtKB-EC"/>
</dbReference>
<dbReference type="GO" id="GO:0002143">
    <property type="term" value="P:tRNA wobble position uridine thiolation"/>
    <property type="evidence" value="ECO:0007669"/>
    <property type="project" value="TreeGrafter"/>
</dbReference>
<dbReference type="CDD" id="cd01998">
    <property type="entry name" value="MnmA_TRMU-like"/>
    <property type="match status" value="1"/>
</dbReference>
<dbReference type="FunFam" id="2.30.30.280:FF:000001">
    <property type="entry name" value="tRNA-specific 2-thiouridylase MnmA"/>
    <property type="match status" value="1"/>
</dbReference>
<dbReference type="FunFam" id="2.40.30.10:FF:000023">
    <property type="entry name" value="tRNA-specific 2-thiouridylase MnmA"/>
    <property type="match status" value="1"/>
</dbReference>
<dbReference type="FunFam" id="3.40.50.620:FF:000004">
    <property type="entry name" value="tRNA-specific 2-thiouridylase MnmA"/>
    <property type="match status" value="1"/>
</dbReference>
<dbReference type="Gene3D" id="2.30.30.280">
    <property type="entry name" value="Adenine nucleotide alpha hydrolases-like domains"/>
    <property type="match status" value="1"/>
</dbReference>
<dbReference type="Gene3D" id="3.40.50.620">
    <property type="entry name" value="HUPs"/>
    <property type="match status" value="1"/>
</dbReference>
<dbReference type="Gene3D" id="2.40.30.10">
    <property type="entry name" value="Translation factors"/>
    <property type="match status" value="1"/>
</dbReference>
<dbReference type="HAMAP" id="MF_00144">
    <property type="entry name" value="tRNA_thiouridyl_MnmA"/>
    <property type="match status" value="1"/>
</dbReference>
<dbReference type="InterPro" id="IPR004506">
    <property type="entry name" value="MnmA-like"/>
</dbReference>
<dbReference type="InterPro" id="IPR046885">
    <property type="entry name" value="MnmA-like_C"/>
</dbReference>
<dbReference type="InterPro" id="IPR046884">
    <property type="entry name" value="MnmA-like_central"/>
</dbReference>
<dbReference type="InterPro" id="IPR023382">
    <property type="entry name" value="MnmA-like_central_sf"/>
</dbReference>
<dbReference type="InterPro" id="IPR014729">
    <property type="entry name" value="Rossmann-like_a/b/a_fold"/>
</dbReference>
<dbReference type="NCBIfam" id="NF001138">
    <property type="entry name" value="PRK00143.1"/>
    <property type="match status" value="1"/>
</dbReference>
<dbReference type="NCBIfam" id="TIGR00420">
    <property type="entry name" value="trmU"/>
    <property type="match status" value="1"/>
</dbReference>
<dbReference type="PANTHER" id="PTHR11933:SF5">
    <property type="entry name" value="MITOCHONDRIAL TRNA-SPECIFIC 2-THIOURIDYLASE 1"/>
    <property type="match status" value="1"/>
</dbReference>
<dbReference type="PANTHER" id="PTHR11933">
    <property type="entry name" value="TRNA 5-METHYLAMINOMETHYL-2-THIOURIDYLATE -METHYLTRANSFERASE"/>
    <property type="match status" value="1"/>
</dbReference>
<dbReference type="Pfam" id="PF03054">
    <property type="entry name" value="tRNA_Me_trans"/>
    <property type="match status" value="1"/>
</dbReference>
<dbReference type="Pfam" id="PF20258">
    <property type="entry name" value="tRNA_Me_trans_C"/>
    <property type="match status" value="1"/>
</dbReference>
<dbReference type="Pfam" id="PF20259">
    <property type="entry name" value="tRNA_Me_trans_M"/>
    <property type="match status" value="1"/>
</dbReference>
<dbReference type="SUPFAM" id="SSF52402">
    <property type="entry name" value="Adenine nucleotide alpha hydrolases-like"/>
    <property type="match status" value="1"/>
</dbReference>
<feature type="chain" id="PRO_1000096291" description="tRNA-specific 2-thiouridylase MnmA">
    <location>
        <begin position="1"/>
        <end position="361"/>
    </location>
</feature>
<feature type="region of interest" description="Interaction with target base in tRNA" evidence="1">
    <location>
        <begin position="97"/>
        <end position="99"/>
    </location>
</feature>
<feature type="region of interest" description="Interaction with tRNA" evidence="1">
    <location>
        <begin position="149"/>
        <end position="151"/>
    </location>
</feature>
<feature type="region of interest" description="Interaction with tRNA" evidence="1">
    <location>
        <begin position="311"/>
        <end position="312"/>
    </location>
</feature>
<feature type="active site" description="Nucleophile" evidence="1">
    <location>
        <position position="102"/>
    </location>
</feature>
<feature type="active site" description="Cysteine persulfide intermediate" evidence="1">
    <location>
        <position position="199"/>
    </location>
</feature>
<feature type="binding site" evidence="1">
    <location>
        <begin position="11"/>
        <end position="18"/>
    </location>
    <ligand>
        <name>ATP</name>
        <dbReference type="ChEBI" id="CHEBI:30616"/>
    </ligand>
</feature>
<feature type="binding site" evidence="1">
    <location>
        <position position="37"/>
    </location>
    <ligand>
        <name>ATP</name>
        <dbReference type="ChEBI" id="CHEBI:30616"/>
    </ligand>
</feature>
<feature type="binding site" evidence="1">
    <location>
        <position position="126"/>
    </location>
    <ligand>
        <name>ATP</name>
        <dbReference type="ChEBI" id="CHEBI:30616"/>
    </ligand>
</feature>
<feature type="site" description="Interaction with tRNA" evidence="1">
    <location>
        <position position="127"/>
    </location>
</feature>
<feature type="site" description="Interaction with tRNA" evidence="1">
    <location>
        <position position="344"/>
    </location>
</feature>
<feature type="disulfide bond" description="Alternate" evidence="1">
    <location>
        <begin position="102"/>
        <end position="199"/>
    </location>
</feature>
<accession>B3R6Q0</accession>
<name>MNMA_CUPTR</name>
<keyword id="KW-0067">ATP-binding</keyword>
<keyword id="KW-0963">Cytoplasm</keyword>
<keyword id="KW-1015">Disulfide bond</keyword>
<keyword id="KW-0547">Nucleotide-binding</keyword>
<keyword id="KW-0694">RNA-binding</keyword>
<keyword id="KW-0808">Transferase</keyword>
<keyword id="KW-0819">tRNA processing</keyword>
<keyword id="KW-0820">tRNA-binding</keyword>
<gene>
    <name evidence="1" type="primary">mnmA</name>
    <name type="ordered locus">RALTA_A2602</name>
</gene>
<sequence>MSGAAKRVVVGMSGGVDSSVTAWLLKQQGYEVIGLFMKNWEDDDDSEYCSTRQDWLDVVSVADLIGVDVEAVNFAAEYKDRVFADFLREYSAGRTPNPDVLCNAEIKFKAFLDHAMSLGAETIATGHYARVRQNAAGRFELLKALDHTKDQSYFLHRLNQAQLSRTLFPLGEIPKTRVREIAAEIGLPNAKKKDSTGICFIGERPFRDFLNRYLPTKPGPMKTPEGKVVGEHIGLAFYTLGQRKGIGLGGSRDGNGDAWYVARKDMANNTLYVVQGHDHPWLLTPVLNASDLSWVAGEPPAAGAAMAAKTRYRQSDAACTVQAVDADALSLGFAEPQWAVTPGQSAVLYDGDICLGGGIIQ</sequence>
<organism>
    <name type="scientific">Cupriavidus taiwanensis (strain DSM 17343 / BCRC 17206 / CCUG 44338 / CIP 107171 / LMG 19424 / R1)</name>
    <name type="common">Ralstonia taiwanensis (strain LMG 19424)</name>
    <dbReference type="NCBI Taxonomy" id="977880"/>
    <lineage>
        <taxon>Bacteria</taxon>
        <taxon>Pseudomonadati</taxon>
        <taxon>Pseudomonadota</taxon>
        <taxon>Betaproteobacteria</taxon>
        <taxon>Burkholderiales</taxon>
        <taxon>Burkholderiaceae</taxon>
        <taxon>Cupriavidus</taxon>
    </lineage>
</organism>
<comment type="function">
    <text evidence="1">Catalyzes the 2-thiolation of uridine at the wobble position (U34) of tRNA, leading to the formation of s(2)U34.</text>
</comment>
<comment type="catalytic activity">
    <reaction evidence="1">
        <text>S-sulfanyl-L-cysteinyl-[protein] + uridine(34) in tRNA + AH2 + ATP = 2-thiouridine(34) in tRNA + L-cysteinyl-[protein] + A + AMP + diphosphate + H(+)</text>
        <dbReference type="Rhea" id="RHEA:47032"/>
        <dbReference type="Rhea" id="RHEA-COMP:10131"/>
        <dbReference type="Rhea" id="RHEA-COMP:11726"/>
        <dbReference type="Rhea" id="RHEA-COMP:11727"/>
        <dbReference type="Rhea" id="RHEA-COMP:11728"/>
        <dbReference type="ChEBI" id="CHEBI:13193"/>
        <dbReference type="ChEBI" id="CHEBI:15378"/>
        <dbReference type="ChEBI" id="CHEBI:17499"/>
        <dbReference type="ChEBI" id="CHEBI:29950"/>
        <dbReference type="ChEBI" id="CHEBI:30616"/>
        <dbReference type="ChEBI" id="CHEBI:33019"/>
        <dbReference type="ChEBI" id="CHEBI:61963"/>
        <dbReference type="ChEBI" id="CHEBI:65315"/>
        <dbReference type="ChEBI" id="CHEBI:87170"/>
        <dbReference type="ChEBI" id="CHEBI:456215"/>
        <dbReference type="EC" id="2.8.1.13"/>
    </reaction>
</comment>
<comment type="subcellular location">
    <subcellularLocation>
        <location evidence="1">Cytoplasm</location>
    </subcellularLocation>
</comment>
<comment type="similarity">
    <text evidence="1">Belongs to the MnmA/TRMU family.</text>
</comment>
<reference key="1">
    <citation type="journal article" date="2008" name="Genome Res.">
        <title>Genome sequence of the beta-rhizobium Cupriavidus taiwanensis and comparative genomics of rhizobia.</title>
        <authorList>
            <person name="Amadou C."/>
            <person name="Pascal G."/>
            <person name="Mangenot S."/>
            <person name="Glew M."/>
            <person name="Bontemps C."/>
            <person name="Capela D."/>
            <person name="Carrere S."/>
            <person name="Cruveiller S."/>
            <person name="Dossat C."/>
            <person name="Lajus A."/>
            <person name="Marchetti M."/>
            <person name="Poinsot V."/>
            <person name="Rouy Z."/>
            <person name="Servin B."/>
            <person name="Saad M."/>
            <person name="Schenowitz C."/>
            <person name="Barbe V."/>
            <person name="Batut J."/>
            <person name="Medigue C."/>
            <person name="Masson-Boivin C."/>
        </authorList>
    </citation>
    <scope>NUCLEOTIDE SEQUENCE [LARGE SCALE GENOMIC DNA]</scope>
    <source>
        <strain>DSM 17343 / BCRC 17206 / CCUG 44338 / CIP 107171 / LMG 19424 / R1</strain>
    </source>
</reference>
<evidence type="ECO:0000255" key="1">
    <source>
        <dbReference type="HAMAP-Rule" id="MF_00144"/>
    </source>
</evidence>
<protein>
    <recommendedName>
        <fullName evidence="1">tRNA-specific 2-thiouridylase MnmA</fullName>
        <ecNumber evidence="1">2.8.1.13</ecNumber>
    </recommendedName>
</protein>
<proteinExistence type="inferred from homology"/>